<keyword id="KW-0997">Cell inner membrane</keyword>
<keyword id="KW-1003">Cell membrane</keyword>
<keyword id="KW-0407">Ion channel</keyword>
<keyword id="KW-0406">Ion transport</keyword>
<keyword id="KW-0472">Membrane</keyword>
<keyword id="KW-0479">Metal-binding</keyword>
<keyword id="KW-0915">Sodium</keyword>
<keyword id="KW-0812">Transmembrane</keyword>
<keyword id="KW-1133">Transmembrane helix</keyword>
<keyword id="KW-0813">Transport</keyword>
<accession>Q5WZ32</accession>
<dbReference type="EMBL" id="CR628337">
    <property type="protein sequence ID" value="CAH14780.1"/>
    <property type="molecule type" value="Genomic_DNA"/>
</dbReference>
<dbReference type="RefSeq" id="WP_011214751.1">
    <property type="nucleotide sequence ID" value="NC_006369.1"/>
</dbReference>
<dbReference type="SMR" id="Q5WZ32"/>
<dbReference type="KEGG" id="lpf:lpl0550"/>
<dbReference type="LegioList" id="lpl0550"/>
<dbReference type="HOGENOM" id="CLU_114342_2_3_6"/>
<dbReference type="Proteomes" id="UP000002517">
    <property type="component" value="Chromosome"/>
</dbReference>
<dbReference type="GO" id="GO:0005886">
    <property type="term" value="C:plasma membrane"/>
    <property type="evidence" value="ECO:0007669"/>
    <property type="project" value="UniProtKB-SubCell"/>
</dbReference>
<dbReference type="GO" id="GO:0062054">
    <property type="term" value="F:fluoride channel activity"/>
    <property type="evidence" value="ECO:0007669"/>
    <property type="project" value="UniProtKB-UniRule"/>
</dbReference>
<dbReference type="GO" id="GO:0046872">
    <property type="term" value="F:metal ion binding"/>
    <property type="evidence" value="ECO:0007669"/>
    <property type="project" value="UniProtKB-KW"/>
</dbReference>
<dbReference type="GO" id="GO:0140114">
    <property type="term" value="P:cellular detoxification of fluoride"/>
    <property type="evidence" value="ECO:0007669"/>
    <property type="project" value="UniProtKB-UniRule"/>
</dbReference>
<dbReference type="HAMAP" id="MF_00454">
    <property type="entry name" value="FluC"/>
    <property type="match status" value="1"/>
</dbReference>
<dbReference type="InterPro" id="IPR003691">
    <property type="entry name" value="FluC"/>
</dbReference>
<dbReference type="NCBIfam" id="TIGR00494">
    <property type="entry name" value="crcB"/>
    <property type="match status" value="1"/>
</dbReference>
<dbReference type="PANTHER" id="PTHR28259">
    <property type="entry name" value="FLUORIDE EXPORT PROTEIN 1-RELATED"/>
    <property type="match status" value="1"/>
</dbReference>
<dbReference type="PANTHER" id="PTHR28259:SF1">
    <property type="entry name" value="FLUORIDE EXPORT PROTEIN 1-RELATED"/>
    <property type="match status" value="1"/>
</dbReference>
<dbReference type="Pfam" id="PF02537">
    <property type="entry name" value="CRCB"/>
    <property type="match status" value="1"/>
</dbReference>
<sequence length="134" mass="14580">MVVAPYLAVAIGGSLGAMSRYLVTIMAQNAWGIKFPYGTLLVNTLGSFLAGFFLIVLVGRFSAEESFRLFLFTGFLGAFTTFSSFAAESLFMFEQGYWFKLITNILVNNVGSLSMVFVGTLVAKYVLLGHQGSN</sequence>
<name>FLUC_LEGPL</name>
<gene>
    <name evidence="1" type="primary">fluC</name>
    <name evidence="1" type="synonym">crcB</name>
    <name type="ordered locus">lpl0550</name>
</gene>
<comment type="function">
    <text evidence="1">Fluoride-specific ion channel. Important for reducing fluoride concentration in the cell, thus reducing its toxicity.</text>
</comment>
<comment type="catalytic activity">
    <reaction evidence="1">
        <text>fluoride(in) = fluoride(out)</text>
        <dbReference type="Rhea" id="RHEA:76159"/>
        <dbReference type="ChEBI" id="CHEBI:17051"/>
    </reaction>
    <physiologicalReaction direction="left-to-right" evidence="1">
        <dbReference type="Rhea" id="RHEA:76160"/>
    </physiologicalReaction>
</comment>
<comment type="activity regulation">
    <text evidence="1">Na(+) is not transported, but it plays an essential structural role and its presence is essential for fluoride channel function.</text>
</comment>
<comment type="subcellular location">
    <subcellularLocation>
        <location evidence="1">Cell inner membrane</location>
        <topology evidence="1">Multi-pass membrane protein</topology>
    </subcellularLocation>
</comment>
<comment type="similarity">
    <text evidence="1">Belongs to the fluoride channel Fluc/FEX (TC 1.A.43) family.</text>
</comment>
<feature type="chain" id="PRO_0000110120" description="Fluoride-specific ion channel FluC">
    <location>
        <begin position="1"/>
        <end position="134"/>
    </location>
</feature>
<feature type="transmembrane region" description="Helical" evidence="1">
    <location>
        <begin position="7"/>
        <end position="27"/>
    </location>
</feature>
<feature type="transmembrane region" description="Helical" evidence="1">
    <location>
        <begin position="38"/>
        <end position="58"/>
    </location>
</feature>
<feature type="transmembrane region" description="Helical" evidence="1">
    <location>
        <begin position="69"/>
        <end position="89"/>
    </location>
</feature>
<feature type="transmembrane region" description="Helical" evidence="1">
    <location>
        <begin position="110"/>
        <end position="130"/>
    </location>
</feature>
<feature type="binding site" evidence="1">
    <location>
        <position position="77"/>
    </location>
    <ligand>
        <name>Na(+)</name>
        <dbReference type="ChEBI" id="CHEBI:29101"/>
        <note>structural</note>
    </ligand>
</feature>
<feature type="binding site" evidence="1">
    <location>
        <position position="80"/>
    </location>
    <ligand>
        <name>Na(+)</name>
        <dbReference type="ChEBI" id="CHEBI:29101"/>
        <note>structural</note>
    </ligand>
</feature>
<evidence type="ECO:0000255" key="1">
    <source>
        <dbReference type="HAMAP-Rule" id="MF_00454"/>
    </source>
</evidence>
<organism>
    <name type="scientific">Legionella pneumophila (strain Lens)</name>
    <dbReference type="NCBI Taxonomy" id="297245"/>
    <lineage>
        <taxon>Bacteria</taxon>
        <taxon>Pseudomonadati</taxon>
        <taxon>Pseudomonadota</taxon>
        <taxon>Gammaproteobacteria</taxon>
        <taxon>Legionellales</taxon>
        <taxon>Legionellaceae</taxon>
        <taxon>Legionella</taxon>
    </lineage>
</organism>
<proteinExistence type="inferred from homology"/>
<reference key="1">
    <citation type="journal article" date="2004" name="Nat. Genet.">
        <title>Evidence in the Legionella pneumophila genome for exploitation of host cell functions and high genome plasticity.</title>
        <authorList>
            <person name="Cazalet C."/>
            <person name="Rusniok C."/>
            <person name="Brueggemann H."/>
            <person name="Zidane N."/>
            <person name="Magnier A."/>
            <person name="Ma L."/>
            <person name="Tichit M."/>
            <person name="Jarraud S."/>
            <person name="Bouchier C."/>
            <person name="Vandenesch F."/>
            <person name="Kunst F."/>
            <person name="Etienne J."/>
            <person name="Glaser P."/>
            <person name="Buchrieser C."/>
        </authorList>
    </citation>
    <scope>NUCLEOTIDE SEQUENCE [LARGE SCALE GENOMIC DNA]</scope>
    <source>
        <strain>Lens</strain>
    </source>
</reference>
<protein>
    <recommendedName>
        <fullName evidence="1">Fluoride-specific ion channel FluC</fullName>
    </recommendedName>
</protein>